<feature type="chain" id="PRO_0000380690" description="Sulfate transporter">
    <location>
        <begin position="1"/>
        <end position="734"/>
    </location>
</feature>
<feature type="transmembrane region" description="Helical" evidence="4">
    <location>
        <begin position="113"/>
        <end position="133"/>
    </location>
</feature>
<feature type="transmembrane region" description="Helical" evidence="4">
    <location>
        <begin position="138"/>
        <end position="158"/>
    </location>
</feature>
<feature type="transmembrane region" description="Helical" evidence="4">
    <location>
        <begin position="214"/>
        <end position="234"/>
    </location>
</feature>
<feature type="transmembrane region" description="Helical" evidence="4">
    <location>
        <begin position="237"/>
        <end position="257"/>
    </location>
</feature>
<feature type="transmembrane region" description="Helical" evidence="4">
    <location>
        <begin position="379"/>
        <end position="399"/>
    </location>
</feature>
<feature type="transmembrane region" description="Helical" evidence="4">
    <location>
        <begin position="415"/>
        <end position="435"/>
    </location>
</feature>
<feature type="transmembrane region" description="Helical" evidence="4">
    <location>
        <begin position="453"/>
        <end position="473"/>
    </location>
</feature>
<feature type="transmembrane region" description="Helical" evidence="4">
    <location>
        <begin position="519"/>
        <end position="539"/>
    </location>
</feature>
<feature type="domain" description="STAS" evidence="5">
    <location>
        <begin position="563"/>
        <end position="714"/>
    </location>
</feature>
<feature type="region of interest" description="Disordered" evidence="6">
    <location>
        <begin position="1"/>
        <end position="38"/>
    </location>
</feature>
<feature type="compositionally biased region" description="Basic and acidic residues" evidence="6">
    <location>
        <begin position="1"/>
        <end position="18"/>
    </location>
</feature>
<feature type="modified residue" description="Phosphoserine" evidence="2">
    <location>
        <position position="12"/>
    </location>
</feature>
<feature type="modified residue" description="Phosphoserine" evidence="2">
    <location>
        <position position="16"/>
    </location>
</feature>
<feature type="glycosylation site" description="N-linked (GlcNAc...) asparagine" evidence="4">
    <location>
        <position position="194"/>
    </location>
</feature>
<feature type="sequence variant" description="3-fold reduction in the uptake of sulfate by fibroblasts." evidence="7">
    <original>I</original>
    <variation>S</variation>
    <location>
        <position position="520"/>
    </location>
</feature>
<name>S26A2_BOVIN</name>
<protein>
    <recommendedName>
        <fullName>Sulfate transporter</fullName>
    </recommendedName>
    <alternativeName>
        <fullName>Solute carrier family 26 member 2</fullName>
    </alternativeName>
</protein>
<keyword id="KW-1003">Cell membrane</keyword>
<keyword id="KW-0325">Glycoprotein</keyword>
<keyword id="KW-0472">Membrane</keyword>
<keyword id="KW-0597">Phosphoprotein</keyword>
<keyword id="KW-1185">Reference proteome</keyword>
<keyword id="KW-0812">Transmembrane</keyword>
<keyword id="KW-1133">Transmembrane helix</keyword>
<keyword id="KW-0813">Transport</keyword>
<dbReference type="EMBL" id="AJ223615">
    <property type="protein sequence ID" value="CAB69640.1"/>
    <property type="molecule type" value="Genomic_DNA"/>
</dbReference>
<dbReference type="RefSeq" id="NP_001035615.1">
    <property type="nucleotide sequence ID" value="NM_001040525.1"/>
</dbReference>
<dbReference type="SMR" id="Q9BEG8"/>
<dbReference type="FunCoup" id="Q9BEG8">
    <property type="interactions" value="299"/>
</dbReference>
<dbReference type="STRING" id="9913.ENSBTAP00000019462"/>
<dbReference type="GlyCosmos" id="Q9BEG8">
    <property type="glycosylation" value="1 site, No reported glycans"/>
</dbReference>
<dbReference type="GlyGen" id="Q9BEG8">
    <property type="glycosylation" value="1 site"/>
</dbReference>
<dbReference type="PaxDb" id="9913-ENSBTAP00000019462"/>
<dbReference type="GeneID" id="513953"/>
<dbReference type="KEGG" id="bta:513953"/>
<dbReference type="CTD" id="1836"/>
<dbReference type="eggNOG" id="KOG0236">
    <property type="taxonomic scope" value="Eukaryota"/>
</dbReference>
<dbReference type="InParanoid" id="Q9BEG8"/>
<dbReference type="OrthoDB" id="288203at2759"/>
<dbReference type="Proteomes" id="UP000009136">
    <property type="component" value="Unplaced"/>
</dbReference>
<dbReference type="GO" id="GO:0016324">
    <property type="term" value="C:apical plasma membrane"/>
    <property type="evidence" value="ECO:0007669"/>
    <property type="project" value="UniProtKB-SubCell"/>
</dbReference>
<dbReference type="GO" id="GO:0005886">
    <property type="term" value="C:plasma membrane"/>
    <property type="evidence" value="ECO:0000250"/>
    <property type="project" value="UniProtKB"/>
</dbReference>
<dbReference type="GO" id="GO:0015106">
    <property type="term" value="F:bicarbonate transmembrane transporter activity"/>
    <property type="evidence" value="ECO:0000318"/>
    <property type="project" value="GO_Central"/>
</dbReference>
<dbReference type="GO" id="GO:0015108">
    <property type="term" value="F:chloride transmembrane transporter activity"/>
    <property type="evidence" value="ECO:0000318"/>
    <property type="project" value="GO_Central"/>
</dbReference>
<dbReference type="GO" id="GO:0019531">
    <property type="term" value="F:oxalate transmembrane transporter activity"/>
    <property type="evidence" value="ECO:0000318"/>
    <property type="project" value="GO_Central"/>
</dbReference>
<dbReference type="GO" id="GO:0008271">
    <property type="term" value="F:secondary active sulfate transmembrane transporter activity"/>
    <property type="evidence" value="ECO:0007669"/>
    <property type="project" value="InterPro"/>
</dbReference>
<dbReference type="GO" id="GO:0015116">
    <property type="term" value="F:sulfate transmembrane transporter activity"/>
    <property type="evidence" value="ECO:0000250"/>
    <property type="project" value="UniProtKB"/>
</dbReference>
<dbReference type="GO" id="GO:1902476">
    <property type="term" value="P:chloride transmembrane transport"/>
    <property type="evidence" value="ECO:0000318"/>
    <property type="project" value="GO_Central"/>
</dbReference>
<dbReference type="GO" id="GO:0002062">
    <property type="term" value="P:chondrocyte differentiation"/>
    <property type="evidence" value="ECO:0000250"/>
    <property type="project" value="UniProtKB"/>
</dbReference>
<dbReference type="GO" id="GO:0035988">
    <property type="term" value="P:chondrocyte proliferation"/>
    <property type="evidence" value="ECO:0000250"/>
    <property type="project" value="UniProtKB"/>
</dbReference>
<dbReference type="GO" id="GO:1902358">
    <property type="term" value="P:sulfate transmembrane transport"/>
    <property type="evidence" value="ECO:0000314"/>
    <property type="project" value="UniProtKB"/>
</dbReference>
<dbReference type="FunFam" id="3.30.750.24:FF:000015">
    <property type="entry name" value="Sulfate transporter"/>
    <property type="match status" value="1"/>
</dbReference>
<dbReference type="Gene3D" id="3.30.750.24">
    <property type="entry name" value="STAS domain"/>
    <property type="match status" value="1"/>
</dbReference>
<dbReference type="InterPro" id="IPR018045">
    <property type="entry name" value="S04_transporter_CS"/>
</dbReference>
<dbReference type="InterPro" id="IPR011547">
    <property type="entry name" value="SLC26A/SulP_dom"/>
</dbReference>
<dbReference type="InterPro" id="IPR001902">
    <property type="entry name" value="SLC26A/SulP_fam"/>
</dbReference>
<dbReference type="InterPro" id="IPR002645">
    <property type="entry name" value="STAS_dom"/>
</dbReference>
<dbReference type="InterPro" id="IPR036513">
    <property type="entry name" value="STAS_dom_sf"/>
</dbReference>
<dbReference type="NCBIfam" id="TIGR00815">
    <property type="entry name" value="sulP"/>
    <property type="match status" value="1"/>
</dbReference>
<dbReference type="PANTHER" id="PTHR11814">
    <property type="entry name" value="SULFATE TRANSPORTER"/>
    <property type="match status" value="1"/>
</dbReference>
<dbReference type="Pfam" id="PF01740">
    <property type="entry name" value="STAS"/>
    <property type="match status" value="1"/>
</dbReference>
<dbReference type="Pfam" id="PF00916">
    <property type="entry name" value="Sulfate_transp"/>
    <property type="match status" value="1"/>
</dbReference>
<dbReference type="SUPFAM" id="SSF52091">
    <property type="entry name" value="SpoIIaa-like"/>
    <property type="match status" value="1"/>
</dbReference>
<dbReference type="PROSITE" id="PS01130">
    <property type="entry name" value="SLC26A"/>
    <property type="match status" value="1"/>
</dbReference>
<dbReference type="PROSITE" id="PS50801">
    <property type="entry name" value="STAS"/>
    <property type="match status" value="1"/>
</dbReference>
<accession>Q9BEG8</accession>
<organism>
    <name type="scientific">Bos taurus</name>
    <name type="common">Bovine</name>
    <dbReference type="NCBI Taxonomy" id="9913"/>
    <lineage>
        <taxon>Eukaryota</taxon>
        <taxon>Metazoa</taxon>
        <taxon>Chordata</taxon>
        <taxon>Craniata</taxon>
        <taxon>Vertebrata</taxon>
        <taxon>Euteleostomi</taxon>
        <taxon>Mammalia</taxon>
        <taxon>Eutheria</taxon>
        <taxon>Laurasiatheria</taxon>
        <taxon>Artiodactyla</taxon>
        <taxon>Ruminantia</taxon>
        <taxon>Pecora</taxon>
        <taxon>Bovidae</taxon>
        <taxon>Bovinae</taxon>
        <taxon>Bos</taxon>
    </lineage>
</organism>
<evidence type="ECO:0000250" key="1">
    <source>
        <dbReference type="UniProtKB" id="O70531"/>
    </source>
</evidence>
<evidence type="ECO:0000250" key="2">
    <source>
        <dbReference type="UniProtKB" id="P50443"/>
    </source>
</evidence>
<evidence type="ECO:0000250" key="3">
    <source>
        <dbReference type="UniProtKB" id="Q62273"/>
    </source>
</evidence>
<evidence type="ECO:0000255" key="4"/>
<evidence type="ECO:0000255" key="5">
    <source>
        <dbReference type="PROSITE-ProRule" id="PRU00198"/>
    </source>
</evidence>
<evidence type="ECO:0000256" key="6">
    <source>
        <dbReference type="SAM" id="MobiDB-lite"/>
    </source>
</evidence>
<evidence type="ECO:0000269" key="7">
    <source>
    </source>
</evidence>
<evidence type="ECO:0000305" key="8"/>
<gene>
    <name type="primary">SLC26A2</name>
</gene>
<reference key="1">
    <citation type="journal article" date="2003" name="Gene">
        <title>Molecular cloning, mapping, and functional analysis of the bovine sulfate transporter SLC26a2 gene.</title>
        <authorList>
            <person name="Brenig B."/>
            <person name="Baumgartner B.G."/>
            <person name="Kriegesmann B."/>
            <person name="Habermann F."/>
            <person name="Fries R."/>
            <person name="Swalve H.H."/>
        </authorList>
    </citation>
    <scope>NUCLEOTIDE SEQUENCE [GENOMIC DNA]</scope>
    <scope>VARIANT SER-520</scope>
    <scope>FUNCTION</scope>
</reference>
<sequence>MSLKNEDQNDLSPKDSVKGNDQYRAPSGIHLEPEEESRNDFWQFEPSNLFRHPRIHLEPQEKSDNNFKKFVIKKLEKSCQCSSTKAKNTIFGFLPVLQWLPKYDLKKNILGDVMSGLIVGILLVPQSIAYSLLAGQEPIYGLYTSFFASLIYFILGTSRHISVGIFGILCLMIGEVVDRELYIAGYDTVHAASNESSLVNQISDKTCDRSCYAIIVGSTVTFVAGVYQVAMGFFQVGFVSVYLSDALLGGFVTGASFTILTSQVKYLLGLSLPRSAGVGSLITTWLHVFRNIRKTNICDLITSLLCLLVLLPTKELNERFKSKLKAPIPVELFVIVAATLASHFGKLNEKYGTSIAGHIPTGFMPPKAPDWNLIPRVAVDAIAIAIIGFAITVSLSEMFAKKHGYTVKANQEMYAIGFCNIIPSFFHCFTTSAALAKTLVKESTGCQTQVSGVMTALVLLLVLLVIAPLFFSLQKSVLGVITIVNLRGALCKFKDLPQMWRISRMDTVIWFVTMLSSALISTEIGLLTGVCFSMFCVILRTQKPKASLLGLVEDSEVFESMSAYKNLQAKSGIKIFRFVAPLYYVNKEYFKSVLYKKTLNPVLVKAAQRKAAKRKIKRETVTPSGIQDEVSVQLSHDPLEFHTIVIDCSAIQFLDTAGIHTLKEVRRDYEAVGIQVLLAQCNPSVRDSLARGEYCKKDEENLLFYSIYEAMTFAEDSQNQKERHIPNGPNFSSD</sequence>
<comment type="function">
    <text evidence="3 7">Sulfate transporter which mediates sulfate uptake into chondrocytes in order to maintain adequate sulfation of proteoglycans which is needed for cartilage development (PubMed:14597181). Mediates electroneutral anion exchange of sulfate ions for oxalate ions, sulfate and oxalate ions for chloride and/or hydroxyl ions and chloride ions for bromide, iodide and nitrate ions (By similarity). The coupling of sulfate transport to both hydroxyl and chloride ions likely serves to ensure transport at both acidic pH when most sulfate uptake is mediated by sulfate-hydroxide exchange and alkaline pH when most sulfate uptake is mediated by sulfate-chloride exchange (By similarity). Essential for chondrocyte proliferation, differentiation and cell size expansion (By similarity).</text>
</comment>
<comment type="catalytic activity">
    <reaction evidence="3">
        <text>oxalate(in) + sulfate(out) = oxalate(out) + sulfate(in)</text>
        <dbReference type="Rhea" id="RHEA:72275"/>
        <dbReference type="ChEBI" id="CHEBI:16189"/>
        <dbReference type="ChEBI" id="CHEBI:30623"/>
    </reaction>
</comment>
<comment type="catalytic activity">
    <reaction evidence="3">
        <text>sulfate(out) + 2 chloride(in) = sulfate(in) + 2 chloride(out)</text>
        <dbReference type="Rhea" id="RHEA:75091"/>
        <dbReference type="ChEBI" id="CHEBI:16189"/>
        <dbReference type="ChEBI" id="CHEBI:17996"/>
    </reaction>
</comment>
<comment type="catalytic activity">
    <reaction evidence="3">
        <text>oxalate(out) + 2 chloride(in) = oxalate(in) + 2 chloride(out)</text>
        <dbReference type="Rhea" id="RHEA:75095"/>
        <dbReference type="ChEBI" id="CHEBI:17996"/>
        <dbReference type="ChEBI" id="CHEBI:30623"/>
    </reaction>
</comment>
<comment type="catalytic activity">
    <reaction evidence="3">
        <text>bromide(in) + chloride(out) = bromide(out) + chloride(in)</text>
        <dbReference type="Rhea" id="RHEA:75335"/>
        <dbReference type="ChEBI" id="CHEBI:15858"/>
        <dbReference type="ChEBI" id="CHEBI:17996"/>
    </reaction>
</comment>
<comment type="catalytic activity">
    <reaction evidence="3">
        <text>nitrate(in) + chloride(out) = nitrate(out) + chloride(in)</text>
        <dbReference type="Rhea" id="RHEA:75339"/>
        <dbReference type="ChEBI" id="CHEBI:17632"/>
        <dbReference type="ChEBI" id="CHEBI:17996"/>
    </reaction>
</comment>
<comment type="catalytic activity">
    <reaction evidence="3">
        <text>iodide(in) + chloride(out) = iodide(out) + chloride(in)</text>
        <dbReference type="Rhea" id="RHEA:72379"/>
        <dbReference type="ChEBI" id="CHEBI:16382"/>
        <dbReference type="ChEBI" id="CHEBI:17996"/>
    </reaction>
</comment>
<comment type="subcellular location">
    <subcellularLocation>
        <location evidence="2">Cell membrane</location>
        <topology evidence="4">Multi-pass membrane protein</topology>
    </subcellularLocation>
    <subcellularLocation>
        <location evidence="1">Apical cell membrane</location>
        <topology evidence="4">Multi-pass membrane protein</topology>
    </subcellularLocation>
</comment>
<comment type="PTM">
    <text evidence="2">N-glycosylated.</text>
</comment>
<comment type="similarity">
    <text evidence="8">Belongs to the SLC26A/SulP transporter (TC 2.A.53) family.</text>
</comment>
<proteinExistence type="inferred from homology"/>